<feature type="chain" id="PRO_1000199451" description="Proline--tRNA ligase">
    <location>
        <begin position="1"/>
        <end position="441"/>
    </location>
</feature>
<sequence length="441" mass="49165">MRLSRYFLPILRETPKEAEIVSHRLMLRAGMIRQEAAGIYAWLPLGLRVLNKVCDVIRAEQDRAGAVEILMPTIQAADLWRESGRYEAYGKEMLRLKDRHERELLYGPTAEEVVTEIFRASARSYKDLPKNLYQISWKFRDEVRPRFGTMRSREFLMKDGYSFDLDQAAARHSYNKVFVSYLRTFETLGLRAIPMRADTGPIGGDLSHEFIILAKTGESEVFCDRAYLDMPVPPPSVDFDDVAGLQGVVDSWTSHYAATDEMHDEAVFAEVPEASRLSARGIEVGHIFYFGTKYSTPMKAVVTGPDGQERPVHMGSYGIGPSRLVAATIEASHDEAGIIWPDAIAPFDVALINLKVGDAACDAACAEIQSALETAGLSVLYDDRDERPGAKFATADLIGLPWQVIVGPKGLAEGKIELKRRASGERETLDPVDLPARIRRV</sequence>
<protein>
    <recommendedName>
        <fullName evidence="1">Proline--tRNA ligase</fullName>
        <ecNumber evidence="1">6.1.1.15</ecNumber>
    </recommendedName>
    <alternativeName>
        <fullName evidence="1">Prolyl-tRNA synthetase</fullName>
        <shortName evidence="1">ProRS</shortName>
    </alternativeName>
</protein>
<accession>B1ZA28</accession>
<dbReference type="EC" id="6.1.1.15" evidence="1"/>
<dbReference type="EMBL" id="CP001029">
    <property type="protein sequence ID" value="ACB79177.1"/>
    <property type="molecule type" value="Genomic_DNA"/>
</dbReference>
<dbReference type="RefSeq" id="WP_012452929.1">
    <property type="nucleotide sequence ID" value="NC_010725.1"/>
</dbReference>
<dbReference type="SMR" id="B1ZA28"/>
<dbReference type="STRING" id="441620.Mpop_1001"/>
<dbReference type="KEGG" id="mpo:Mpop_1001"/>
<dbReference type="eggNOG" id="COG0442">
    <property type="taxonomic scope" value="Bacteria"/>
</dbReference>
<dbReference type="HOGENOM" id="CLU_016739_4_2_5"/>
<dbReference type="OrthoDB" id="9809052at2"/>
<dbReference type="Proteomes" id="UP000007136">
    <property type="component" value="Chromosome"/>
</dbReference>
<dbReference type="GO" id="GO:0005829">
    <property type="term" value="C:cytosol"/>
    <property type="evidence" value="ECO:0007669"/>
    <property type="project" value="TreeGrafter"/>
</dbReference>
<dbReference type="GO" id="GO:0005524">
    <property type="term" value="F:ATP binding"/>
    <property type="evidence" value="ECO:0007669"/>
    <property type="project" value="UniProtKB-UniRule"/>
</dbReference>
<dbReference type="GO" id="GO:0004827">
    <property type="term" value="F:proline-tRNA ligase activity"/>
    <property type="evidence" value="ECO:0007669"/>
    <property type="project" value="UniProtKB-UniRule"/>
</dbReference>
<dbReference type="GO" id="GO:0006433">
    <property type="term" value="P:prolyl-tRNA aminoacylation"/>
    <property type="evidence" value="ECO:0007669"/>
    <property type="project" value="UniProtKB-UniRule"/>
</dbReference>
<dbReference type="CDD" id="cd00861">
    <property type="entry name" value="ProRS_anticodon_short"/>
    <property type="match status" value="1"/>
</dbReference>
<dbReference type="CDD" id="cd00779">
    <property type="entry name" value="ProRS_core_prok"/>
    <property type="match status" value="1"/>
</dbReference>
<dbReference type="FunFam" id="3.30.930.10:FF:000042">
    <property type="entry name" value="probable proline--tRNA ligase, mitochondrial"/>
    <property type="match status" value="1"/>
</dbReference>
<dbReference type="FunFam" id="3.40.50.800:FF:000032">
    <property type="entry name" value="Proline--tRNA ligase"/>
    <property type="match status" value="1"/>
</dbReference>
<dbReference type="Gene3D" id="3.40.50.800">
    <property type="entry name" value="Anticodon-binding domain"/>
    <property type="match status" value="1"/>
</dbReference>
<dbReference type="Gene3D" id="3.30.930.10">
    <property type="entry name" value="Bira Bifunctional Protein, Domain 2"/>
    <property type="match status" value="1"/>
</dbReference>
<dbReference type="HAMAP" id="MF_01570">
    <property type="entry name" value="Pro_tRNA_synth_type2"/>
    <property type="match status" value="1"/>
</dbReference>
<dbReference type="InterPro" id="IPR002314">
    <property type="entry name" value="aa-tRNA-synt_IIb"/>
</dbReference>
<dbReference type="InterPro" id="IPR006195">
    <property type="entry name" value="aa-tRNA-synth_II"/>
</dbReference>
<dbReference type="InterPro" id="IPR045864">
    <property type="entry name" value="aa-tRNA-synth_II/BPL/LPL"/>
</dbReference>
<dbReference type="InterPro" id="IPR004154">
    <property type="entry name" value="Anticodon-bd"/>
</dbReference>
<dbReference type="InterPro" id="IPR036621">
    <property type="entry name" value="Anticodon-bd_dom_sf"/>
</dbReference>
<dbReference type="InterPro" id="IPR002316">
    <property type="entry name" value="Pro-tRNA-ligase_IIa"/>
</dbReference>
<dbReference type="InterPro" id="IPR004500">
    <property type="entry name" value="Pro-tRNA-synth_IIa_bac-type"/>
</dbReference>
<dbReference type="InterPro" id="IPR050062">
    <property type="entry name" value="Pro-tRNA_synthetase"/>
</dbReference>
<dbReference type="InterPro" id="IPR023716">
    <property type="entry name" value="Prolyl-tRNA_ligase_IIa_type2"/>
</dbReference>
<dbReference type="InterPro" id="IPR044140">
    <property type="entry name" value="ProRS_anticodon_short"/>
</dbReference>
<dbReference type="InterPro" id="IPR033730">
    <property type="entry name" value="ProRS_core_prok"/>
</dbReference>
<dbReference type="NCBIfam" id="NF008979">
    <property type="entry name" value="PRK12325.1"/>
    <property type="match status" value="1"/>
</dbReference>
<dbReference type="NCBIfam" id="TIGR00409">
    <property type="entry name" value="proS_fam_II"/>
    <property type="match status" value="1"/>
</dbReference>
<dbReference type="PANTHER" id="PTHR42753">
    <property type="entry name" value="MITOCHONDRIAL RIBOSOME PROTEIN L39/PROLYL-TRNA LIGASE FAMILY MEMBER"/>
    <property type="match status" value="1"/>
</dbReference>
<dbReference type="PANTHER" id="PTHR42753:SF2">
    <property type="entry name" value="PROLINE--TRNA LIGASE"/>
    <property type="match status" value="1"/>
</dbReference>
<dbReference type="Pfam" id="PF03129">
    <property type="entry name" value="HGTP_anticodon"/>
    <property type="match status" value="1"/>
</dbReference>
<dbReference type="Pfam" id="PF00587">
    <property type="entry name" value="tRNA-synt_2b"/>
    <property type="match status" value="1"/>
</dbReference>
<dbReference type="PRINTS" id="PR01046">
    <property type="entry name" value="TRNASYNTHPRO"/>
</dbReference>
<dbReference type="SUPFAM" id="SSF52954">
    <property type="entry name" value="Class II aaRS ABD-related"/>
    <property type="match status" value="1"/>
</dbReference>
<dbReference type="SUPFAM" id="SSF55681">
    <property type="entry name" value="Class II aaRS and biotin synthetases"/>
    <property type="match status" value="1"/>
</dbReference>
<dbReference type="PROSITE" id="PS50862">
    <property type="entry name" value="AA_TRNA_LIGASE_II"/>
    <property type="match status" value="1"/>
</dbReference>
<reference key="1">
    <citation type="submission" date="2008-04" db="EMBL/GenBank/DDBJ databases">
        <title>Complete sequence of chromosome of Methylobacterium populi BJ001.</title>
        <authorList>
            <consortium name="US DOE Joint Genome Institute"/>
            <person name="Copeland A."/>
            <person name="Lucas S."/>
            <person name="Lapidus A."/>
            <person name="Glavina del Rio T."/>
            <person name="Dalin E."/>
            <person name="Tice H."/>
            <person name="Bruce D."/>
            <person name="Goodwin L."/>
            <person name="Pitluck S."/>
            <person name="Chertkov O."/>
            <person name="Brettin T."/>
            <person name="Detter J.C."/>
            <person name="Han C."/>
            <person name="Kuske C.R."/>
            <person name="Schmutz J."/>
            <person name="Larimer F."/>
            <person name="Land M."/>
            <person name="Hauser L."/>
            <person name="Kyrpides N."/>
            <person name="Mikhailova N."/>
            <person name="Marx C."/>
            <person name="Richardson P."/>
        </authorList>
    </citation>
    <scope>NUCLEOTIDE SEQUENCE [LARGE SCALE GENOMIC DNA]</scope>
    <source>
        <strain>ATCC BAA-705 / NCIMB 13946 / BJ001</strain>
    </source>
</reference>
<name>SYP_METPB</name>
<gene>
    <name evidence="1" type="primary">proS</name>
    <name type="ordered locus">Mpop_1001</name>
</gene>
<evidence type="ECO:0000255" key="1">
    <source>
        <dbReference type="HAMAP-Rule" id="MF_01570"/>
    </source>
</evidence>
<comment type="function">
    <text evidence="1">Catalyzes the attachment of proline to tRNA(Pro) in a two-step reaction: proline is first activated by ATP to form Pro-AMP and then transferred to the acceptor end of tRNA(Pro).</text>
</comment>
<comment type="catalytic activity">
    <reaction evidence="1">
        <text>tRNA(Pro) + L-proline + ATP = L-prolyl-tRNA(Pro) + AMP + diphosphate</text>
        <dbReference type="Rhea" id="RHEA:14305"/>
        <dbReference type="Rhea" id="RHEA-COMP:9700"/>
        <dbReference type="Rhea" id="RHEA-COMP:9702"/>
        <dbReference type="ChEBI" id="CHEBI:30616"/>
        <dbReference type="ChEBI" id="CHEBI:33019"/>
        <dbReference type="ChEBI" id="CHEBI:60039"/>
        <dbReference type="ChEBI" id="CHEBI:78442"/>
        <dbReference type="ChEBI" id="CHEBI:78532"/>
        <dbReference type="ChEBI" id="CHEBI:456215"/>
        <dbReference type="EC" id="6.1.1.15"/>
    </reaction>
</comment>
<comment type="subunit">
    <text evidence="1">Homodimer.</text>
</comment>
<comment type="subcellular location">
    <subcellularLocation>
        <location evidence="1">Cytoplasm</location>
    </subcellularLocation>
</comment>
<comment type="similarity">
    <text evidence="1">Belongs to the class-II aminoacyl-tRNA synthetase family. ProS type 2 subfamily.</text>
</comment>
<keyword id="KW-0030">Aminoacyl-tRNA synthetase</keyword>
<keyword id="KW-0067">ATP-binding</keyword>
<keyword id="KW-0963">Cytoplasm</keyword>
<keyword id="KW-0436">Ligase</keyword>
<keyword id="KW-0547">Nucleotide-binding</keyword>
<keyword id="KW-0648">Protein biosynthesis</keyword>
<organism>
    <name type="scientific">Methylorubrum populi (strain ATCC BAA-705 / NCIMB 13946 / BJ001)</name>
    <name type="common">Methylobacterium populi</name>
    <dbReference type="NCBI Taxonomy" id="441620"/>
    <lineage>
        <taxon>Bacteria</taxon>
        <taxon>Pseudomonadati</taxon>
        <taxon>Pseudomonadota</taxon>
        <taxon>Alphaproteobacteria</taxon>
        <taxon>Hyphomicrobiales</taxon>
        <taxon>Methylobacteriaceae</taxon>
        <taxon>Methylorubrum</taxon>
    </lineage>
</organism>
<proteinExistence type="inferred from homology"/>